<keyword id="KW-1185">Reference proteome</keyword>
<keyword id="KW-0677">Repeat</keyword>
<keyword id="KW-0804">Transcription</keyword>
<keyword id="KW-0805">Transcription regulation</keyword>
<keyword id="KW-0833">Ubl conjugation pathway</keyword>
<keyword id="KW-0853">WD repeat</keyword>
<evidence type="ECO:0000250" key="1"/>
<evidence type="ECO:0000255" key="2">
    <source>
        <dbReference type="PROSITE-ProRule" id="PRU00080"/>
    </source>
</evidence>
<evidence type="ECO:0000256" key="3">
    <source>
        <dbReference type="SAM" id="MobiDB-lite"/>
    </source>
</evidence>
<evidence type="ECO:0000305" key="4"/>
<protein>
    <recommendedName>
        <fullName>Probable E3 ubiquitin ligase complex SCF subunit sconB</fullName>
    </recommendedName>
    <alternativeName>
        <fullName>Sulfur controller B</fullName>
    </alternativeName>
    <alternativeName>
        <fullName>Sulfur metabolite repression control protein B</fullName>
    </alternativeName>
</protein>
<reference key="1">
    <citation type="submission" date="2005-09" db="EMBL/GenBank/DDBJ databases">
        <title>Annotation of the Aspergillus terreus NIH2624 genome.</title>
        <authorList>
            <person name="Birren B.W."/>
            <person name="Lander E.S."/>
            <person name="Galagan J.E."/>
            <person name="Nusbaum C."/>
            <person name="Devon K."/>
            <person name="Henn M."/>
            <person name="Ma L.-J."/>
            <person name="Jaffe D.B."/>
            <person name="Butler J."/>
            <person name="Alvarez P."/>
            <person name="Gnerre S."/>
            <person name="Grabherr M."/>
            <person name="Kleber M."/>
            <person name="Mauceli E.W."/>
            <person name="Brockman W."/>
            <person name="Rounsley S."/>
            <person name="Young S.K."/>
            <person name="LaButti K."/>
            <person name="Pushparaj V."/>
            <person name="DeCaprio D."/>
            <person name="Crawford M."/>
            <person name="Koehrsen M."/>
            <person name="Engels R."/>
            <person name="Montgomery P."/>
            <person name="Pearson M."/>
            <person name="Howarth C."/>
            <person name="Larson L."/>
            <person name="Luoma S."/>
            <person name="White J."/>
            <person name="Alvarado L."/>
            <person name="Kodira C.D."/>
            <person name="Zeng Q."/>
            <person name="Oleary S."/>
            <person name="Yandava C."/>
            <person name="Denning D.W."/>
            <person name="Nierman W.C."/>
            <person name="Milne T."/>
            <person name="Madden K."/>
        </authorList>
    </citation>
    <scope>NUCLEOTIDE SEQUENCE [LARGE SCALE GENOMIC DNA]</scope>
    <source>
        <strain>NIH 2624 / FGSC A1156</strain>
    </source>
</reference>
<proteinExistence type="inferred from homology"/>
<accession>Q0CY32</accession>
<organism>
    <name type="scientific">Aspergillus terreus (strain NIH 2624 / FGSC A1156)</name>
    <dbReference type="NCBI Taxonomy" id="341663"/>
    <lineage>
        <taxon>Eukaryota</taxon>
        <taxon>Fungi</taxon>
        <taxon>Dikarya</taxon>
        <taxon>Ascomycota</taxon>
        <taxon>Pezizomycotina</taxon>
        <taxon>Eurotiomycetes</taxon>
        <taxon>Eurotiomycetidae</taxon>
        <taxon>Eurotiales</taxon>
        <taxon>Aspergillaceae</taxon>
        <taxon>Aspergillus</taxon>
        <taxon>Aspergillus subgen. Circumdati</taxon>
    </lineage>
</organism>
<name>SCONB_ASPTN</name>
<gene>
    <name type="primary">sconB</name>
    <name type="ORF">ATEG_01402</name>
</gene>
<sequence length="673" mass="75579">MDSTQVSFKSIFGGTPEPTDEVDAEPDPTQHGPHSFNNVTTTSAKLADENVAPFLAKHIPEQYAPLGSRTGKPEDLSSANSKYCYRHRPDLKCRRQADEPSMDKLQRDLETLPQSDQQGIAHIWSLFSAAPAKHRKLILQGLMAQCCFPQLSFVSATVRDLIRIDFLTALPPEISFKILCYLDTTSLCKAAQVSRRWRALADDDVVWHRMCEQHIHRKCKKCGWGLPLLERKRLRESKREIELRATTWDISGPSPTVTSTGEQQREQSAAPESSSSGKRKQDTSDEETAVVKRQCSSLAPDSENDDAFFKKRYRPWKEVYKDRFKVGTNWKYGRCSTKIFKGHTNGVMCLQFEDNILATGSYDATIKIWDTETGEELRTLYGHESGIRCLQFDDTKLISGSMDRSLKVWNWRTGECISTYTGHRGGVIGLHFDATILASASVDKTVKIWNFEDKSTCLLRGHTDWVNAVRVDTTSRTVFSASDDCTVRLWDLDTKQCIRTFHGHVGQVQQVIPLPREFEFEEHDAECENDNVSTVSDDPGSPAPQTTFGVSSIEPASQSSMFGPSFDNGRPAPPRYIVTSALDSTIRLWETTTGRCLRTFFGHLEGVWALGADTLRIVSGAEDRMVKIWDPRTGKCERTFTGHSGPVTCIGLGDSRFATGSEDCEVRMYSFQS</sequence>
<comment type="function">
    <text evidence="1">Component of the SCF(sconB) E3 ubiquitin ligase complex involved in the regulation of sulfur metabolite repression, probably by mediating the inactivation or degradation of the metR transcription factor.</text>
</comment>
<comment type="pathway">
    <text>Protein modification; protein ubiquitination.</text>
</comment>
<comment type="subunit">
    <text evidence="1">Component of the SCF(sconB) E3 ubiquitin ligase complex.</text>
</comment>
<comment type="similarity">
    <text evidence="4">Belongs to the WD repeat MET30/SCONB/SCON-2 family.</text>
</comment>
<feature type="chain" id="PRO_0000397251" description="Probable E3 ubiquitin ligase complex SCF subunit sconB">
    <location>
        <begin position="1"/>
        <end position="673"/>
    </location>
</feature>
<feature type="domain" description="F-box" evidence="2">
    <location>
        <begin position="164"/>
        <end position="210"/>
    </location>
</feature>
<feature type="repeat" description="WD 1">
    <location>
        <begin position="342"/>
        <end position="379"/>
    </location>
</feature>
<feature type="repeat" description="WD 2">
    <location>
        <begin position="382"/>
        <end position="421"/>
    </location>
</feature>
<feature type="repeat" description="WD 3">
    <location>
        <begin position="423"/>
        <end position="459"/>
    </location>
</feature>
<feature type="repeat" description="WD 4">
    <location>
        <begin position="461"/>
        <end position="502"/>
    </location>
</feature>
<feature type="repeat" description="WD 5">
    <location>
        <begin position="556"/>
        <end position="599"/>
    </location>
</feature>
<feature type="repeat" description="WD 6">
    <location>
        <begin position="602"/>
        <end position="639"/>
    </location>
</feature>
<feature type="repeat" description="WD 7">
    <location>
        <begin position="642"/>
        <end position="673"/>
    </location>
</feature>
<feature type="region of interest" description="Disordered" evidence="3">
    <location>
        <begin position="1"/>
        <end position="37"/>
    </location>
</feature>
<feature type="region of interest" description="Disordered" evidence="3">
    <location>
        <begin position="249"/>
        <end position="302"/>
    </location>
</feature>
<feature type="compositionally biased region" description="Polar residues" evidence="3">
    <location>
        <begin position="253"/>
        <end position="276"/>
    </location>
</feature>
<dbReference type="EMBL" id="CH476595">
    <property type="protein sequence ID" value="EAU38159.1"/>
    <property type="molecule type" value="Genomic_DNA"/>
</dbReference>
<dbReference type="RefSeq" id="XP_001208767.1">
    <property type="nucleotide sequence ID" value="XM_001208767.1"/>
</dbReference>
<dbReference type="SMR" id="Q0CY32"/>
<dbReference type="STRING" id="341663.Q0CY32"/>
<dbReference type="EnsemblFungi" id="EAU38159">
    <property type="protein sequence ID" value="EAU38159"/>
    <property type="gene ID" value="ATEG_01402"/>
</dbReference>
<dbReference type="GeneID" id="4316261"/>
<dbReference type="VEuPathDB" id="FungiDB:ATEG_01402"/>
<dbReference type="eggNOG" id="KOG0274">
    <property type="taxonomic scope" value="Eukaryota"/>
</dbReference>
<dbReference type="HOGENOM" id="CLU_000288_103_1_1"/>
<dbReference type="OMA" id="GIAHVWS"/>
<dbReference type="OrthoDB" id="5580488at2759"/>
<dbReference type="UniPathway" id="UPA00143"/>
<dbReference type="Proteomes" id="UP000007963">
    <property type="component" value="Unassembled WGS sequence"/>
</dbReference>
<dbReference type="GO" id="GO:0016567">
    <property type="term" value="P:protein ubiquitination"/>
    <property type="evidence" value="ECO:0007669"/>
    <property type="project" value="UniProtKB-UniPathway"/>
</dbReference>
<dbReference type="CDD" id="cd22147">
    <property type="entry name" value="F-box_SpPof1-like"/>
    <property type="match status" value="1"/>
</dbReference>
<dbReference type="CDD" id="cd00200">
    <property type="entry name" value="WD40"/>
    <property type="match status" value="1"/>
</dbReference>
<dbReference type="FunFam" id="1.20.1280.50:FF:000016">
    <property type="entry name" value="E3 ubiquitin ligase complex SCF subunit sconB"/>
    <property type="match status" value="1"/>
</dbReference>
<dbReference type="FunFam" id="2.130.10.10:FF:000770">
    <property type="entry name" value="E3 ubiquitin ligase complex SCF subunit sconB"/>
    <property type="match status" value="1"/>
</dbReference>
<dbReference type="FunFam" id="2.130.10.10:FF:000890">
    <property type="entry name" value="Probable E3 ubiquitin ligase complex SCF subunit sconB"/>
    <property type="match status" value="1"/>
</dbReference>
<dbReference type="Gene3D" id="1.20.1280.50">
    <property type="match status" value="1"/>
</dbReference>
<dbReference type="Gene3D" id="2.130.10.10">
    <property type="entry name" value="YVTN repeat-like/Quinoprotein amine dehydrogenase"/>
    <property type="match status" value="2"/>
</dbReference>
<dbReference type="InterPro" id="IPR036047">
    <property type="entry name" value="F-box-like_dom_sf"/>
</dbReference>
<dbReference type="InterPro" id="IPR001810">
    <property type="entry name" value="F-box_dom"/>
</dbReference>
<dbReference type="InterPro" id="IPR020472">
    <property type="entry name" value="G-protein_beta_WD-40_rep"/>
</dbReference>
<dbReference type="InterPro" id="IPR051075">
    <property type="entry name" value="SCF_subunit_WD-repeat"/>
</dbReference>
<dbReference type="InterPro" id="IPR015943">
    <property type="entry name" value="WD40/YVTN_repeat-like_dom_sf"/>
</dbReference>
<dbReference type="InterPro" id="IPR019775">
    <property type="entry name" value="WD40_repeat_CS"/>
</dbReference>
<dbReference type="InterPro" id="IPR036322">
    <property type="entry name" value="WD40_repeat_dom_sf"/>
</dbReference>
<dbReference type="InterPro" id="IPR001680">
    <property type="entry name" value="WD40_rpt"/>
</dbReference>
<dbReference type="PANTHER" id="PTHR19872">
    <property type="entry name" value="UBIQUITIN LIGASE SPECIFICITY FACTOR/HREP PROTEIN"/>
    <property type="match status" value="1"/>
</dbReference>
<dbReference type="PANTHER" id="PTHR19872:SF9">
    <property type="entry name" value="UBIQUITIN-BINDING SDF UBIQUITIN LIGASE COMPLEX SUBUNIT"/>
    <property type="match status" value="1"/>
</dbReference>
<dbReference type="Pfam" id="PF12937">
    <property type="entry name" value="F-box-like"/>
    <property type="match status" value="1"/>
</dbReference>
<dbReference type="Pfam" id="PF00400">
    <property type="entry name" value="WD40"/>
    <property type="match status" value="6"/>
</dbReference>
<dbReference type="PRINTS" id="PR00320">
    <property type="entry name" value="GPROTEINBRPT"/>
</dbReference>
<dbReference type="SMART" id="SM00256">
    <property type="entry name" value="FBOX"/>
    <property type="match status" value="1"/>
</dbReference>
<dbReference type="SMART" id="SM00320">
    <property type="entry name" value="WD40"/>
    <property type="match status" value="7"/>
</dbReference>
<dbReference type="SUPFAM" id="SSF81383">
    <property type="entry name" value="F-box domain"/>
    <property type="match status" value="1"/>
</dbReference>
<dbReference type="SUPFAM" id="SSF50978">
    <property type="entry name" value="WD40 repeat-like"/>
    <property type="match status" value="1"/>
</dbReference>
<dbReference type="PROSITE" id="PS50181">
    <property type="entry name" value="FBOX"/>
    <property type="match status" value="1"/>
</dbReference>
<dbReference type="PROSITE" id="PS00678">
    <property type="entry name" value="WD_REPEATS_1"/>
    <property type="match status" value="4"/>
</dbReference>
<dbReference type="PROSITE" id="PS50082">
    <property type="entry name" value="WD_REPEATS_2"/>
    <property type="match status" value="7"/>
</dbReference>
<dbReference type="PROSITE" id="PS50294">
    <property type="entry name" value="WD_REPEATS_REGION"/>
    <property type="match status" value="1"/>
</dbReference>